<comment type="function">
    <text evidence="1">Involved in the restart of stalled replication forks, which reloads the replicative helicase on sites other than the origin of replication. Can function in multiple replication restart pathways. Displaces ssDNA from a PriB-ssDNA complex. Probably forms a spiral filament on ssDNA.</text>
</comment>
<comment type="subunit">
    <text evidence="1">Homooligomerizes. Interacts with PriB. Component of the replication restart primosome. Primosome assembly occurs via a 'hand-off' mechanism. PriA binds to replication forks, subsequently PriB then DnaT bind; DnaT then displaces ssDNA to generate the helicase loading substrate.</text>
</comment>
<comment type="similarity">
    <text evidence="1">Belongs to the DnaT family.</text>
</comment>
<name>DNAT_SHIB3</name>
<keyword id="KW-0235">DNA replication</keyword>
<keyword id="KW-0238">DNA-binding</keyword>
<keyword id="KW-0639">Primosome</keyword>
<keyword id="KW-1185">Reference proteome</keyword>
<evidence type="ECO:0000255" key="1">
    <source>
        <dbReference type="HAMAP-Rule" id="MF_01061"/>
    </source>
</evidence>
<evidence type="ECO:0000256" key="2">
    <source>
        <dbReference type="SAM" id="MobiDB-lite"/>
    </source>
</evidence>
<dbReference type="EMBL" id="CP001063">
    <property type="protein sequence ID" value="ACD10449.1"/>
    <property type="molecule type" value="Genomic_DNA"/>
</dbReference>
<dbReference type="RefSeq" id="WP_000098818.1">
    <property type="nucleotide sequence ID" value="NC_010658.1"/>
</dbReference>
<dbReference type="SMR" id="B2TZP5"/>
<dbReference type="STRING" id="344609.SbBS512_E4902"/>
<dbReference type="GeneID" id="93777486"/>
<dbReference type="KEGG" id="sbc:SbBS512_E4902"/>
<dbReference type="HOGENOM" id="CLU_1501592_0_0_6"/>
<dbReference type="Proteomes" id="UP000001030">
    <property type="component" value="Chromosome"/>
</dbReference>
<dbReference type="GO" id="GO:1990077">
    <property type="term" value="C:primosome complex"/>
    <property type="evidence" value="ECO:0007669"/>
    <property type="project" value="UniProtKB-KW"/>
</dbReference>
<dbReference type="GO" id="GO:0006269">
    <property type="term" value="P:DNA replication, synthesis of primer"/>
    <property type="evidence" value="ECO:0007669"/>
    <property type="project" value="UniProtKB-UniRule"/>
</dbReference>
<dbReference type="FunFam" id="1.10.8.1180:FF:000001">
    <property type="entry name" value="Primosomal protein 1"/>
    <property type="match status" value="1"/>
</dbReference>
<dbReference type="Gene3D" id="1.10.8.1180">
    <property type="match status" value="1"/>
</dbReference>
<dbReference type="HAMAP" id="MF_01061">
    <property type="entry name" value="DnaT"/>
    <property type="match status" value="1"/>
</dbReference>
<dbReference type="InterPro" id="IPR020917">
    <property type="entry name" value="DnaT"/>
</dbReference>
<dbReference type="InterPro" id="IPR040480">
    <property type="entry name" value="DnaT_DNA_bind"/>
</dbReference>
<dbReference type="NCBIfam" id="NF002770">
    <property type="entry name" value="PRK02854.1"/>
    <property type="match status" value="1"/>
</dbReference>
<dbReference type="Pfam" id="PF17948">
    <property type="entry name" value="DnaT"/>
    <property type="match status" value="1"/>
</dbReference>
<proteinExistence type="inferred from homology"/>
<protein>
    <recommendedName>
        <fullName evidence="1">Replication restart protein DnaT</fullName>
    </recommendedName>
</protein>
<feature type="chain" id="PRO_1000136445" description="Replication restart protein DnaT">
    <location>
        <begin position="1"/>
        <end position="179"/>
    </location>
</feature>
<feature type="region of interest" description="Disordered" evidence="2">
    <location>
        <begin position="156"/>
        <end position="179"/>
    </location>
</feature>
<organism>
    <name type="scientific">Shigella boydii serotype 18 (strain CDC 3083-94 / BS512)</name>
    <dbReference type="NCBI Taxonomy" id="344609"/>
    <lineage>
        <taxon>Bacteria</taxon>
        <taxon>Pseudomonadati</taxon>
        <taxon>Pseudomonadota</taxon>
        <taxon>Gammaproteobacteria</taxon>
        <taxon>Enterobacterales</taxon>
        <taxon>Enterobacteriaceae</taxon>
        <taxon>Shigella</taxon>
    </lineage>
</organism>
<reference key="1">
    <citation type="submission" date="2008-05" db="EMBL/GenBank/DDBJ databases">
        <title>Complete sequence of Shigella boydii serotype 18 strain BS512.</title>
        <authorList>
            <person name="Rasko D.A."/>
            <person name="Rosovitz M."/>
            <person name="Maurelli A.T."/>
            <person name="Myers G."/>
            <person name="Seshadri R."/>
            <person name="Cer R."/>
            <person name="Jiang L."/>
            <person name="Ravel J."/>
            <person name="Sebastian Y."/>
        </authorList>
    </citation>
    <scope>NUCLEOTIDE SEQUENCE [LARGE SCALE GENOMIC DNA]</scope>
    <source>
        <strain>CDC 3083-94 / BS512</strain>
    </source>
</reference>
<accession>B2TZP5</accession>
<sequence>MSSRVLTPDVVGIDALVHDHQTVLAKAEGGVVAVFANNAPAFYAVTPARLAELLALEEKLARPGSDVALDDQLYQEPQAAPVAVPMGKFAMYPDWQPDADFIRLAALWGVALREPVTTEELASFIAYWQAEGKVFHHVQWQQKLARSLQIGRASNGGLPKRDVNTVSEPDSQIPPGFRG</sequence>
<gene>
    <name evidence="1" type="primary">dnaT</name>
    <name type="ordered locus">SbBS512_E4902</name>
</gene>